<feature type="chain" id="PRO_0000255698" description="Small ribosomal subunit protein uS17">
    <location>
        <begin position="1"/>
        <end position="79"/>
    </location>
</feature>
<organism>
    <name type="scientific">Roseobacter denitrificans (strain ATCC 33942 / OCh 114)</name>
    <name type="common">Erythrobacter sp. (strain OCh 114)</name>
    <name type="synonym">Roseobacter denitrificans</name>
    <dbReference type="NCBI Taxonomy" id="375451"/>
    <lineage>
        <taxon>Bacteria</taxon>
        <taxon>Pseudomonadati</taxon>
        <taxon>Pseudomonadota</taxon>
        <taxon>Alphaproteobacteria</taxon>
        <taxon>Rhodobacterales</taxon>
        <taxon>Roseobacteraceae</taxon>
        <taxon>Roseobacter</taxon>
    </lineage>
</organism>
<proteinExistence type="inferred from homology"/>
<name>RS17_ROSDO</name>
<dbReference type="EMBL" id="CP000362">
    <property type="protein sequence ID" value="ABG31058.1"/>
    <property type="molecule type" value="Genomic_DNA"/>
</dbReference>
<dbReference type="RefSeq" id="WP_011567678.1">
    <property type="nucleotide sequence ID" value="NC_008209.1"/>
</dbReference>
<dbReference type="SMR" id="Q16AD5"/>
<dbReference type="STRING" id="375451.RD1_1419"/>
<dbReference type="KEGG" id="rde:RD1_1419"/>
<dbReference type="eggNOG" id="COG0186">
    <property type="taxonomic scope" value="Bacteria"/>
</dbReference>
<dbReference type="HOGENOM" id="CLU_073626_1_1_5"/>
<dbReference type="OrthoDB" id="9811714at2"/>
<dbReference type="Proteomes" id="UP000007029">
    <property type="component" value="Chromosome"/>
</dbReference>
<dbReference type="GO" id="GO:0022627">
    <property type="term" value="C:cytosolic small ribosomal subunit"/>
    <property type="evidence" value="ECO:0007669"/>
    <property type="project" value="TreeGrafter"/>
</dbReference>
<dbReference type="GO" id="GO:0019843">
    <property type="term" value="F:rRNA binding"/>
    <property type="evidence" value="ECO:0007669"/>
    <property type="project" value="UniProtKB-UniRule"/>
</dbReference>
<dbReference type="GO" id="GO:0003735">
    <property type="term" value="F:structural constituent of ribosome"/>
    <property type="evidence" value="ECO:0007669"/>
    <property type="project" value="InterPro"/>
</dbReference>
<dbReference type="GO" id="GO:0006412">
    <property type="term" value="P:translation"/>
    <property type="evidence" value="ECO:0007669"/>
    <property type="project" value="UniProtKB-UniRule"/>
</dbReference>
<dbReference type="CDD" id="cd00364">
    <property type="entry name" value="Ribosomal_uS17"/>
    <property type="match status" value="1"/>
</dbReference>
<dbReference type="Gene3D" id="2.40.50.140">
    <property type="entry name" value="Nucleic acid-binding proteins"/>
    <property type="match status" value="1"/>
</dbReference>
<dbReference type="HAMAP" id="MF_01345_B">
    <property type="entry name" value="Ribosomal_uS17_B"/>
    <property type="match status" value="1"/>
</dbReference>
<dbReference type="InterPro" id="IPR012340">
    <property type="entry name" value="NA-bd_OB-fold"/>
</dbReference>
<dbReference type="InterPro" id="IPR000266">
    <property type="entry name" value="Ribosomal_uS17"/>
</dbReference>
<dbReference type="InterPro" id="IPR019984">
    <property type="entry name" value="Ribosomal_uS17_bact/chlr"/>
</dbReference>
<dbReference type="NCBIfam" id="NF004123">
    <property type="entry name" value="PRK05610.1"/>
    <property type="match status" value="1"/>
</dbReference>
<dbReference type="NCBIfam" id="TIGR03635">
    <property type="entry name" value="uS17_bact"/>
    <property type="match status" value="1"/>
</dbReference>
<dbReference type="PANTHER" id="PTHR10744">
    <property type="entry name" value="40S RIBOSOMAL PROTEIN S11 FAMILY MEMBER"/>
    <property type="match status" value="1"/>
</dbReference>
<dbReference type="PANTHER" id="PTHR10744:SF1">
    <property type="entry name" value="SMALL RIBOSOMAL SUBUNIT PROTEIN US17M"/>
    <property type="match status" value="1"/>
</dbReference>
<dbReference type="Pfam" id="PF00366">
    <property type="entry name" value="Ribosomal_S17"/>
    <property type="match status" value="1"/>
</dbReference>
<dbReference type="PRINTS" id="PR00973">
    <property type="entry name" value="RIBOSOMALS17"/>
</dbReference>
<dbReference type="SUPFAM" id="SSF50249">
    <property type="entry name" value="Nucleic acid-binding proteins"/>
    <property type="match status" value="1"/>
</dbReference>
<sequence>MPKRILSGVVTSDANDQTVSVSVERRFTHPVLKKTIRKSKKYRAHDENNTFKKGDAVRIVECAPKSKTKRWEVLQAAEV</sequence>
<accession>Q16AD5</accession>
<evidence type="ECO:0000255" key="1">
    <source>
        <dbReference type="HAMAP-Rule" id="MF_01345"/>
    </source>
</evidence>
<evidence type="ECO:0000305" key="2"/>
<reference key="1">
    <citation type="journal article" date="2007" name="J. Bacteriol.">
        <title>The complete genome sequence of Roseobacter denitrificans reveals a mixotrophic rather than photosynthetic metabolism.</title>
        <authorList>
            <person name="Swingley W.D."/>
            <person name="Sadekar S."/>
            <person name="Mastrian S.D."/>
            <person name="Matthies H.J."/>
            <person name="Hao J."/>
            <person name="Ramos H."/>
            <person name="Acharya C.R."/>
            <person name="Conrad A.L."/>
            <person name="Taylor H.L."/>
            <person name="Dejesa L.C."/>
            <person name="Shah M.K."/>
            <person name="O'Huallachain M.E."/>
            <person name="Lince M.T."/>
            <person name="Blankenship R.E."/>
            <person name="Beatty J.T."/>
            <person name="Touchman J.W."/>
        </authorList>
    </citation>
    <scope>NUCLEOTIDE SEQUENCE [LARGE SCALE GENOMIC DNA]</scope>
    <source>
        <strain>ATCC 33942 / OCh 114</strain>
    </source>
</reference>
<gene>
    <name evidence="1" type="primary">rpsQ</name>
    <name type="ordered locus">RD1_1419</name>
</gene>
<keyword id="KW-1185">Reference proteome</keyword>
<keyword id="KW-0687">Ribonucleoprotein</keyword>
<keyword id="KW-0689">Ribosomal protein</keyword>
<keyword id="KW-0694">RNA-binding</keyword>
<keyword id="KW-0699">rRNA-binding</keyword>
<protein>
    <recommendedName>
        <fullName evidence="1">Small ribosomal subunit protein uS17</fullName>
    </recommendedName>
    <alternativeName>
        <fullName evidence="2">30S ribosomal protein S17</fullName>
    </alternativeName>
</protein>
<comment type="function">
    <text evidence="1">One of the primary rRNA binding proteins, it binds specifically to the 5'-end of 16S ribosomal RNA.</text>
</comment>
<comment type="subunit">
    <text evidence="1">Part of the 30S ribosomal subunit.</text>
</comment>
<comment type="similarity">
    <text evidence="1">Belongs to the universal ribosomal protein uS17 family.</text>
</comment>